<proteinExistence type="inferred from homology"/>
<accession>Q32GZ5</accession>
<feature type="chain" id="PRO_0000414542" description="Release factor glutamine methyltransferase">
    <location>
        <begin position="1"/>
        <end position="277"/>
    </location>
</feature>
<feature type="binding site" evidence="1">
    <location>
        <begin position="117"/>
        <end position="121"/>
    </location>
    <ligand>
        <name>S-adenosyl-L-methionine</name>
        <dbReference type="ChEBI" id="CHEBI:59789"/>
    </ligand>
</feature>
<feature type="binding site" evidence="1">
    <location>
        <position position="140"/>
    </location>
    <ligand>
        <name>S-adenosyl-L-methionine</name>
        <dbReference type="ChEBI" id="CHEBI:59789"/>
    </ligand>
</feature>
<feature type="binding site" evidence="1">
    <location>
        <position position="168"/>
    </location>
    <ligand>
        <name>S-adenosyl-L-methionine</name>
        <dbReference type="ChEBI" id="CHEBI:59789"/>
    </ligand>
</feature>
<feature type="binding site" evidence="1">
    <location>
        <begin position="183"/>
        <end position="186"/>
    </location>
    <ligand>
        <name>substrate</name>
    </ligand>
</feature>
<feature type="binding site" evidence="1">
    <location>
        <position position="183"/>
    </location>
    <ligand>
        <name>S-adenosyl-L-methionine</name>
        <dbReference type="ChEBI" id="CHEBI:59789"/>
    </ligand>
</feature>
<keyword id="KW-0489">Methyltransferase</keyword>
<keyword id="KW-1185">Reference proteome</keyword>
<keyword id="KW-0949">S-adenosyl-L-methionine</keyword>
<keyword id="KW-0808">Transferase</keyword>
<organism>
    <name type="scientific">Shigella dysenteriae serotype 1 (strain Sd197)</name>
    <dbReference type="NCBI Taxonomy" id="300267"/>
    <lineage>
        <taxon>Bacteria</taxon>
        <taxon>Pseudomonadati</taxon>
        <taxon>Pseudomonadota</taxon>
        <taxon>Gammaproteobacteria</taxon>
        <taxon>Enterobacterales</taxon>
        <taxon>Enterobacteriaceae</taxon>
        <taxon>Shigella</taxon>
    </lineage>
</organism>
<dbReference type="EC" id="2.1.1.297" evidence="1"/>
<dbReference type="EMBL" id="CP000034">
    <property type="protein sequence ID" value="ABB61410.1"/>
    <property type="molecule type" value="Genomic_DNA"/>
</dbReference>
<dbReference type="RefSeq" id="WP_000456449.1">
    <property type="nucleotide sequence ID" value="NC_007606.1"/>
</dbReference>
<dbReference type="RefSeq" id="YP_402901.1">
    <property type="nucleotide sequence ID" value="NC_007606.1"/>
</dbReference>
<dbReference type="SMR" id="Q32GZ5"/>
<dbReference type="STRING" id="300267.SDY_1261"/>
<dbReference type="EnsemblBacteria" id="ABB61410">
    <property type="protein sequence ID" value="ABB61410"/>
    <property type="gene ID" value="SDY_1261"/>
</dbReference>
<dbReference type="KEGG" id="sdy:SDY_1261"/>
<dbReference type="PATRIC" id="fig|300267.13.peg.1498"/>
<dbReference type="HOGENOM" id="CLU_018398_3_1_6"/>
<dbReference type="Proteomes" id="UP000002716">
    <property type="component" value="Chromosome"/>
</dbReference>
<dbReference type="GO" id="GO:0003676">
    <property type="term" value="F:nucleic acid binding"/>
    <property type="evidence" value="ECO:0007669"/>
    <property type="project" value="InterPro"/>
</dbReference>
<dbReference type="GO" id="GO:0102559">
    <property type="term" value="F:protein-(glutamine-N5) methyltransferase activity"/>
    <property type="evidence" value="ECO:0007669"/>
    <property type="project" value="UniProtKB-EC"/>
</dbReference>
<dbReference type="GO" id="GO:0036009">
    <property type="term" value="F:protein-glutamine N-methyltransferase activity"/>
    <property type="evidence" value="ECO:0007669"/>
    <property type="project" value="UniProtKB-UniRule"/>
</dbReference>
<dbReference type="GO" id="GO:0032259">
    <property type="term" value="P:methylation"/>
    <property type="evidence" value="ECO:0007669"/>
    <property type="project" value="UniProtKB-KW"/>
</dbReference>
<dbReference type="CDD" id="cd02440">
    <property type="entry name" value="AdoMet_MTases"/>
    <property type="match status" value="1"/>
</dbReference>
<dbReference type="FunFam" id="1.10.8.10:FF:000032">
    <property type="entry name" value="Release factor glutamine methyltransferase"/>
    <property type="match status" value="1"/>
</dbReference>
<dbReference type="FunFam" id="3.40.50.150:FF:000053">
    <property type="entry name" value="Release factor glutamine methyltransferase"/>
    <property type="match status" value="1"/>
</dbReference>
<dbReference type="Gene3D" id="1.10.8.10">
    <property type="entry name" value="DNA helicase RuvA subunit, C-terminal domain"/>
    <property type="match status" value="1"/>
</dbReference>
<dbReference type="Gene3D" id="3.40.50.150">
    <property type="entry name" value="Vaccinia Virus protein VP39"/>
    <property type="match status" value="1"/>
</dbReference>
<dbReference type="HAMAP" id="MF_02126">
    <property type="entry name" value="RF_methyltr_PrmC"/>
    <property type="match status" value="1"/>
</dbReference>
<dbReference type="InterPro" id="IPR002052">
    <property type="entry name" value="DNA_methylase_N6_adenine_CS"/>
</dbReference>
<dbReference type="InterPro" id="IPR004556">
    <property type="entry name" value="HemK-like"/>
</dbReference>
<dbReference type="InterPro" id="IPR050320">
    <property type="entry name" value="N5-glutamine_MTase"/>
</dbReference>
<dbReference type="InterPro" id="IPR040758">
    <property type="entry name" value="PrmC_N"/>
</dbReference>
<dbReference type="InterPro" id="IPR019874">
    <property type="entry name" value="RF_methyltr_PrmC"/>
</dbReference>
<dbReference type="InterPro" id="IPR029063">
    <property type="entry name" value="SAM-dependent_MTases_sf"/>
</dbReference>
<dbReference type="InterPro" id="IPR007848">
    <property type="entry name" value="Small_mtfrase_dom"/>
</dbReference>
<dbReference type="NCBIfam" id="TIGR00536">
    <property type="entry name" value="hemK_fam"/>
    <property type="match status" value="1"/>
</dbReference>
<dbReference type="NCBIfam" id="TIGR03534">
    <property type="entry name" value="RF_mod_PrmC"/>
    <property type="match status" value="1"/>
</dbReference>
<dbReference type="PANTHER" id="PTHR18895">
    <property type="entry name" value="HEMK METHYLTRANSFERASE"/>
    <property type="match status" value="1"/>
</dbReference>
<dbReference type="PANTHER" id="PTHR18895:SF74">
    <property type="entry name" value="MTRF1L RELEASE FACTOR GLUTAMINE METHYLTRANSFERASE"/>
    <property type="match status" value="1"/>
</dbReference>
<dbReference type="Pfam" id="PF05175">
    <property type="entry name" value="MTS"/>
    <property type="match status" value="1"/>
</dbReference>
<dbReference type="Pfam" id="PF17827">
    <property type="entry name" value="PrmC_N"/>
    <property type="match status" value="1"/>
</dbReference>
<dbReference type="SUPFAM" id="SSF53335">
    <property type="entry name" value="S-adenosyl-L-methionine-dependent methyltransferases"/>
    <property type="match status" value="1"/>
</dbReference>
<evidence type="ECO:0000255" key="1">
    <source>
        <dbReference type="HAMAP-Rule" id="MF_02126"/>
    </source>
</evidence>
<gene>
    <name evidence="1" type="primary">prmC</name>
    <name type="synonym">hemK</name>
    <name type="ordered locus">SDY_1261</name>
</gene>
<protein>
    <recommendedName>
        <fullName evidence="1">Release factor glutamine methyltransferase</fullName>
        <shortName evidence="1">RF MTase</shortName>
        <ecNumber evidence="1">2.1.1.297</ecNumber>
    </recommendedName>
    <alternativeName>
        <fullName evidence="1">N5-glutamine methyltransferase PrmC</fullName>
    </alternativeName>
    <alternativeName>
        <fullName evidence="1">Protein-(glutamine-N5) MTase PrmC</fullName>
    </alternativeName>
    <alternativeName>
        <fullName evidence="1">Protein-glutamine N-methyltransferase PrmC</fullName>
    </alternativeName>
</protein>
<sequence>MEYQHWLREAISQLQASESPRRDAEILLEHVTGKGRTFILAFGETQLTDEQCQQLDALLTRRRDGEPIAHLTGVREFWSLPLFVSPATLIPRPDTECLVEQALARLPEQPCRILDLGTGTGAIALALARERPDCEITAVDRMPDAVALAQRNAQHLAIKNIHILQSDWFSELAGQQFAMIVSNPPYIDEQDPHLQQGDVRFEPLTALVAADSGMADIVHIIEQSRNALVSGGFLLLEHGWQQGEAVRQAFILAGYHDVETCRDYGDNERVTLGRYYQ</sequence>
<name>PRMC_SHIDS</name>
<comment type="function">
    <text evidence="1">Methylates the class 1 translation termination release factors RF1/PrfA and RF2/PrfB on the glutamine residue of the universally conserved GGQ motif.</text>
</comment>
<comment type="catalytic activity">
    <reaction evidence="1">
        <text>L-glutaminyl-[peptide chain release factor] + S-adenosyl-L-methionine = N(5)-methyl-L-glutaminyl-[peptide chain release factor] + S-adenosyl-L-homocysteine + H(+)</text>
        <dbReference type="Rhea" id="RHEA:42896"/>
        <dbReference type="Rhea" id="RHEA-COMP:10271"/>
        <dbReference type="Rhea" id="RHEA-COMP:10272"/>
        <dbReference type="ChEBI" id="CHEBI:15378"/>
        <dbReference type="ChEBI" id="CHEBI:30011"/>
        <dbReference type="ChEBI" id="CHEBI:57856"/>
        <dbReference type="ChEBI" id="CHEBI:59789"/>
        <dbReference type="ChEBI" id="CHEBI:61891"/>
        <dbReference type="EC" id="2.1.1.297"/>
    </reaction>
</comment>
<comment type="similarity">
    <text evidence="1">Belongs to the protein N5-glutamine methyltransferase family. PrmC subfamily.</text>
</comment>
<reference key="1">
    <citation type="journal article" date="2005" name="Nucleic Acids Res.">
        <title>Genome dynamics and diversity of Shigella species, the etiologic agents of bacillary dysentery.</title>
        <authorList>
            <person name="Yang F."/>
            <person name="Yang J."/>
            <person name="Zhang X."/>
            <person name="Chen L."/>
            <person name="Jiang Y."/>
            <person name="Yan Y."/>
            <person name="Tang X."/>
            <person name="Wang J."/>
            <person name="Xiong Z."/>
            <person name="Dong J."/>
            <person name="Xue Y."/>
            <person name="Zhu Y."/>
            <person name="Xu X."/>
            <person name="Sun L."/>
            <person name="Chen S."/>
            <person name="Nie H."/>
            <person name="Peng J."/>
            <person name="Xu J."/>
            <person name="Wang Y."/>
            <person name="Yuan Z."/>
            <person name="Wen Y."/>
            <person name="Yao Z."/>
            <person name="Shen Y."/>
            <person name="Qiang B."/>
            <person name="Hou Y."/>
            <person name="Yu J."/>
            <person name="Jin Q."/>
        </authorList>
    </citation>
    <scope>NUCLEOTIDE SEQUENCE [LARGE SCALE GENOMIC DNA]</scope>
    <source>
        <strain>Sd197</strain>
    </source>
</reference>